<keyword id="KW-0687">Ribonucleoprotein</keyword>
<keyword id="KW-0689">Ribosomal protein</keyword>
<accession>C3L5R2</accession>
<feature type="chain" id="PRO_1000194278" description="Small ribosomal subunit protein bS21">
    <location>
        <begin position="1"/>
        <end position="57"/>
    </location>
</feature>
<organism>
    <name type="scientific">Bacillus anthracis (strain CDC 684 / NRRL 3495)</name>
    <dbReference type="NCBI Taxonomy" id="568206"/>
    <lineage>
        <taxon>Bacteria</taxon>
        <taxon>Bacillati</taxon>
        <taxon>Bacillota</taxon>
        <taxon>Bacilli</taxon>
        <taxon>Bacillales</taxon>
        <taxon>Bacillaceae</taxon>
        <taxon>Bacillus</taxon>
        <taxon>Bacillus cereus group</taxon>
    </lineage>
</organism>
<reference key="1">
    <citation type="submission" date="2008-10" db="EMBL/GenBank/DDBJ databases">
        <title>Genome sequence of Bacillus anthracis str. CDC 684.</title>
        <authorList>
            <person name="Dodson R.J."/>
            <person name="Munk A.C."/>
            <person name="Brettin T."/>
            <person name="Bruce D."/>
            <person name="Detter C."/>
            <person name="Tapia R."/>
            <person name="Han C."/>
            <person name="Sutton G."/>
            <person name="Sims D."/>
        </authorList>
    </citation>
    <scope>NUCLEOTIDE SEQUENCE [LARGE SCALE GENOMIC DNA]</scope>
    <source>
        <strain>CDC 684 / NRRL 3495</strain>
    </source>
</reference>
<comment type="similarity">
    <text evidence="1">Belongs to the bacterial ribosomal protein bS21 family.</text>
</comment>
<gene>
    <name evidence="1" type="primary">rpsU</name>
    <name type="ordered locus">BAMEG_4571</name>
</gene>
<proteinExistence type="inferred from homology"/>
<protein>
    <recommendedName>
        <fullName evidence="1">Small ribosomal subunit protein bS21</fullName>
    </recommendedName>
    <alternativeName>
        <fullName evidence="2">30S ribosomal protein S21</fullName>
    </alternativeName>
</protein>
<name>RS21_BACAC</name>
<dbReference type="EMBL" id="CP001215">
    <property type="protein sequence ID" value="ACP15223.1"/>
    <property type="molecule type" value="Genomic_DNA"/>
</dbReference>
<dbReference type="RefSeq" id="WP_000048061.1">
    <property type="nucleotide sequence ID" value="NC_012581.1"/>
</dbReference>
<dbReference type="SMR" id="C3L5R2"/>
<dbReference type="GeneID" id="93006791"/>
<dbReference type="KEGG" id="bah:BAMEG_4571"/>
<dbReference type="HOGENOM" id="CLU_159258_3_2_9"/>
<dbReference type="GO" id="GO:1990904">
    <property type="term" value="C:ribonucleoprotein complex"/>
    <property type="evidence" value="ECO:0007669"/>
    <property type="project" value="UniProtKB-KW"/>
</dbReference>
<dbReference type="GO" id="GO:0005840">
    <property type="term" value="C:ribosome"/>
    <property type="evidence" value="ECO:0007669"/>
    <property type="project" value="UniProtKB-KW"/>
</dbReference>
<dbReference type="GO" id="GO:0003735">
    <property type="term" value="F:structural constituent of ribosome"/>
    <property type="evidence" value="ECO:0007669"/>
    <property type="project" value="InterPro"/>
</dbReference>
<dbReference type="GO" id="GO:0006412">
    <property type="term" value="P:translation"/>
    <property type="evidence" value="ECO:0007669"/>
    <property type="project" value="UniProtKB-UniRule"/>
</dbReference>
<dbReference type="Gene3D" id="1.20.5.1150">
    <property type="entry name" value="Ribosomal protein S8"/>
    <property type="match status" value="1"/>
</dbReference>
<dbReference type="HAMAP" id="MF_00358">
    <property type="entry name" value="Ribosomal_bS21"/>
    <property type="match status" value="1"/>
</dbReference>
<dbReference type="InterPro" id="IPR001911">
    <property type="entry name" value="Ribosomal_bS21"/>
</dbReference>
<dbReference type="InterPro" id="IPR018278">
    <property type="entry name" value="Ribosomal_bS21_CS"/>
</dbReference>
<dbReference type="InterPro" id="IPR038380">
    <property type="entry name" value="Ribosomal_bS21_sf"/>
</dbReference>
<dbReference type="NCBIfam" id="TIGR00030">
    <property type="entry name" value="S21p"/>
    <property type="match status" value="1"/>
</dbReference>
<dbReference type="PANTHER" id="PTHR21109">
    <property type="entry name" value="MITOCHONDRIAL 28S RIBOSOMAL PROTEIN S21"/>
    <property type="match status" value="1"/>
</dbReference>
<dbReference type="PANTHER" id="PTHR21109:SF22">
    <property type="entry name" value="SMALL RIBOSOMAL SUBUNIT PROTEIN BS21"/>
    <property type="match status" value="1"/>
</dbReference>
<dbReference type="Pfam" id="PF01165">
    <property type="entry name" value="Ribosomal_S21"/>
    <property type="match status" value="1"/>
</dbReference>
<dbReference type="PRINTS" id="PR00976">
    <property type="entry name" value="RIBOSOMALS21"/>
</dbReference>
<dbReference type="PROSITE" id="PS01181">
    <property type="entry name" value="RIBOSOMAL_S21"/>
    <property type="match status" value="1"/>
</dbReference>
<sequence>MSKTVVRKNESLEDALRRFKRSVSKTGTLAEARKREFYEKPSVKRKKKSEAARKRKF</sequence>
<evidence type="ECO:0000255" key="1">
    <source>
        <dbReference type="HAMAP-Rule" id="MF_00358"/>
    </source>
</evidence>
<evidence type="ECO:0000305" key="2"/>